<dbReference type="EC" id="2.7.4.9" evidence="1"/>
<dbReference type="EMBL" id="CP000712">
    <property type="protein sequence ID" value="ABQ79919.1"/>
    <property type="molecule type" value="Genomic_DNA"/>
</dbReference>
<dbReference type="SMR" id="A5W709"/>
<dbReference type="KEGG" id="ppf:Pput_3795"/>
<dbReference type="eggNOG" id="COG0125">
    <property type="taxonomic scope" value="Bacteria"/>
</dbReference>
<dbReference type="HOGENOM" id="CLU_049131_0_2_6"/>
<dbReference type="GO" id="GO:0005829">
    <property type="term" value="C:cytosol"/>
    <property type="evidence" value="ECO:0007669"/>
    <property type="project" value="TreeGrafter"/>
</dbReference>
<dbReference type="GO" id="GO:0005524">
    <property type="term" value="F:ATP binding"/>
    <property type="evidence" value="ECO:0007669"/>
    <property type="project" value="UniProtKB-UniRule"/>
</dbReference>
<dbReference type="GO" id="GO:0004798">
    <property type="term" value="F:dTMP kinase activity"/>
    <property type="evidence" value="ECO:0007669"/>
    <property type="project" value="UniProtKB-UniRule"/>
</dbReference>
<dbReference type="GO" id="GO:0006233">
    <property type="term" value="P:dTDP biosynthetic process"/>
    <property type="evidence" value="ECO:0007669"/>
    <property type="project" value="InterPro"/>
</dbReference>
<dbReference type="GO" id="GO:0006235">
    <property type="term" value="P:dTTP biosynthetic process"/>
    <property type="evidence" value="ECO:0007669"/>
    <property type="project" value="UniProtKB-UniRule"/>
</dbReference>
<dbReference type="GO" id="GO:0006227">
    <property type="term" value="P:dUDP biosynthetic process"/>
    <property type="evidence" value="ECO:0007669"/>
    <property type="project" value="TreeGrafter"/>
</dbReference>
<dbReference type="CDD" id="cd01672">
    <property type="entry name" value="TMPK"/>
    <property type="match status" value="1"/>
</dbReference>
<dbReference type="FunFam" id="3.40.50.300:FF:000225">
    <property type="entry name" value="Thymidylate kinase"/>
    <property type="match status" value="1"/>
</dbReference>
<dbReference type="Gene3D" id="3.40.50.300">
    <property type="entry name" value="P-loop containing nucleotide triphosphate hydrolases"/>
    <property type="match status" value="1"/>
</dbReference>
<dbReference type="HAMAP" id="MF_00165">
    <property type="entry name" value="Thymidylate_kinase"/>
    <property type="match status" value="1"/>
</dbReference>
<dbReference type="InterPro" id="IPR027417">
    <property type="entry name" value="P-loop_NTPase"/>
</dbReference>
<dbReference type="InterPro" id="IPR039430">
    <property type="entry name" value="Thymidylate_kin-like_dom"/>
</dbReference>
<dbReference type="InterPro" id="IPR018094">
    <property type="entry name" value="Thymidylate_kinase"/>
</dbReference>
<dbReference type="NCBIfam" id="TIGR00041">
    <property type="entry name" value="DTMP_kinase"/>
    <property type="match status" value="1"/>
</dbReference>
<dbReference type="PANTHER" id="PTHR10344">
    <property type="entry name" value="THYMIDYLATE KINASE"/>
    <property type="match status" value="1"/>
</dbReference>
<dbReference type="PANTHER" id="PTHR10344:SF4">
    <property type="entry name" value="UMP-CMP KINASE 2, MITOCHONDRIAL"/>
    <property type="match status" value="1"/>
</dbReference>
<dbReference type="Pfam" id="PF02223">
    <property type="entry name" value="Thymidylate_kin"/>
    <property type="match status" value="1"/>
</dbReference>
<dbReference type="SUPFAM" id="SSF52540">
    <property type="entry name" value="P-loop containing nucleoside triphosphate hydrolases"/>
    <property type="match status" value="1"/>
</dbReference>
<feature type="chain" id="PRO_1000023259" description="Thymidylate kinase">
    <location>
        <begin position="1"/>
        <end position="210"/>
    </location>
</feature>
<feature type="binding site" evidence="1">
    <location>
        <begin position="10"/>
        <end position="17"/>
    </location>
    <ligand>
        <name>ATP</name>
        <dbReference type="ChEBI" id="CHEBI:30616"/>
    </ligand>
</feature>
<sequence length="210" mass="22858">MSGLFITLEGPEGAGKSTNRDYLAARLREHGLDVVLTREPGGTPLAEKVRELLLTPSDEGMAADTELLLVFAARAQHLAQVIRPALARGAVVLCDRFTDATYAYQGGGRGLSVERIAVLEQFVQGDLRPDLTLVFDLPVEVGLARAAARGRLDRFEQEGQAFFEAVRQAYLQRAQGAPQRYSLLDAAQSLEAVQRDIDALLPGILERCRG</sequence>
<keyword id="KW-0067">ATP-binding</keyword>
<keyword id="KW-0418">Kinase</keyword>
<keyword id="KW-0545">Nucleotide biosynthesis</keyword>
<keyword id="KW-0547">Nucleotide-binding</keyword>
<keyword id="KW-0808">Transferase</keyword>
<reference key="1">
    <citation type="submission" date="2007-05" db="EMBL/GenBank/DDBJ databases">
        <title>Complete sequence of Pseudomonas putida F1.</title>
        <authorList>
            <consortium name="US DOE Joint Genome Institute"/>
            <person name="Copeland A."/>
            <person name="Lucas S."/>
            <person name="Lapidus A."/>
            <person name="Barry K."/>
            <person name="Detter J.C."/>
            <person name="Glavina del Rio T."/>
            <person name="Hammon N."/>
            <person name="Israni S."/>
            <person name="Dalin E."/>
            <person name="Tice H."/>
            <person name="Pitluck S."/>
            <person name="Chain P."/>
            <person name="Malfatti S."/>
            <person name="Shin M."/>
            <person name="Vergez L."/>
            <person name="Schmutz J."/>
            <person name="Larimer F."/>
            <person name="Land M."/>
            <person name="Hauser L."/>
            <person name="Kyrpides N."/>
            <person name="Lykidis A."/>
            <person name="Parales R."/>
            <person name="Richardson P."/>
        </authorList>
    </citation>
    <scope>NUCLEOTIDE SEQUENCE [LARGE SCALE GENOMIC DNA]</scope>
    <source>
        <strain>ATCC 700007 / DSM 6899 / JCM 31910 / BCRC 17059 / LMG 24140 / F1</strain>
    </source>
</reference>
<proteinExistence type="inferred from homology"/>
<comment type="function">
    <text evidence="1">Phosphorylation of dTMP to form dTDP in both de novo and salvage pathways of dTTP synthesis.</text>
</comment>
<comment type="catalytic activity">
    <reaction evidence="1">
        <text>dTMP + ATP = dTDP + ADP</text>
        <dbReference type="Rhea" id="RHEA:13517"/>
        <dbReference type="ChEBI" id="CHEBI:30616"/>
        <dbReference type="ChEBI" id="CHEBI:58369"/>
        <dbReference type="ChEBI" id="CHEBI:63528"/>
        <dbReference type="ChEBI" id="CHEBI:456216"/>
        <dbReference type="EC" id="2.7.4.9"/>
    </reaction>
</comment>
<comment type="similarity">
    <text evidence="1">Belongs to the thymidylate kinase family.</text>
</comment>
<gene>
    <name evidence="1" type="primary">tmk</name>
    <name type="ordered locus">Pput_3795</name>
</gene>
<accession>A5W709</accession>
<name>KTHY_PSEP1</name>
<organism>
    <name type="scientific">Pseudomonas putida (strain ATCC 700007 / DSM 6899 / JCM 31910 / BCRC 17059 / LMG 24140 / F1)</name>
    <dbReference type="NCBI Taxonomy" id="351746"/>
    <lineage>
        <taxon>Bacteria</taxon>
        <taxon>Pseudomonadati</taxon>
        <taxon>Pseudomonadota</taxon>
        <taxon>Gammaproteobacteria</taxon>
        <taxon>Pseudomonadales</taxon>
        <taxon>Pseudomonadaceae</taxon>
        <taxon>Pseudomonas</taxon>
    </lineage>
</organism>
<protein>
    <recommendedName>
        <fullName evidence="1">Thymidylate kinase</fullName>
        <ecNumber evidence="1">2.7.4.9</ecNumber>
    </recommendedName>
    <alternativeName>
        <fullName evidence="1">dTMP kinase</fullName>
    </alternativeName>
</protein>
<evidence type="ECO:0000255" key="1">
    <source>
        <dbReference type="HAMAP-Rule" id="MF_00165"/>
    </source>
</evidence>